<protein>
    <recommendedName>
        <fullName>Adhesion G-protein coupled receptor F3</fullName>
    </recommendedName>
    <alternativeName>
        <fullName>G-protein coupled receptor 113</fullName>
    </alternativeName>
    <alternativeName>
        <fullName>G-protein coupled receptor PGR23</fullName>
    </alternativeName>
</protein>
<gene>
    <name type="primary">ADGRF3</name>
    <name type="synonym">Gm1041</name>
    <name type="synonym">Gpr113</name>
    <name type="synonym">Pcr113</name>
    <name type="synonym">Pgr23</name>
</gene>
<reference key="1">
    <citation type="journal article" date="2005" name="Genomics">
        <title>Two novel genes, Gpr113, which encodes a family 2 G-protein-coupled receptor, and Trcg1, are selectively expressed in taste receptor cells.</title>
        <authorList>
            <person name="LopezJimenez N.D."/>
            <person name="Sainz E.S."/>
            <person name="Cavenagh M.M."/>
            <person name="Cruz-Ithier M.A."/>
            <person name="Blackwood C.A."/>
            <person name="Battey J.F."/>
            <person name="Sullivan S.L."/>
        </authorList>
    </citation>
    <scope>NUCLEOTIDE SEQUENCE [MRNA]</scope>
    <scope>TISSUE SPECIFICITY</scope>
    <source>
        <strain>C57BL/6J</strain>
    </source>
</reference>
<reference key="2">
    <citation type="journal article" date="2009" name="PLoS Biol.">
        <title>Lineage-specific biology revealed by a finished genome assembly of the mouse.</title>
        <authorList>
            <person name="Church D.M."/>
            <person name="Goodstadt L."/>
            <person name="Hillier L.W."/>
            <person name="Zody M.C."/>
            <person name="Goldstein S."/>
            <person name="She X."/>
            <person name="Bult C.J."/>
            <person name="Agarwala R."/>
            <person name="Cherry J.L."/>
            <person name="DiCuccio M."/>
            <person name="Hlavina W."/>
            <person name="Kapustin Y."/>
            <person name="Meric P."/>
            <person name="Maglott D."/>
            <person name="Birtle Z."/>
            <person name="Marques A.C."/>
            <person name="Graves T."/>
            <person name="Zhou S."/>
            <person name="Teague B."/>
            <person name="Potamousis K."/>
            <person name="Churas C."/>
            <person name="Place M."/>
            <person name="Herschleb J."/>
            <person name="Runnheim R."/>
            <person name="Forrest D."/>
            <person name="Amos-Landgraf J."/>
            <person name="Schwartz D.C."/>
            <person name="Cheng Z."/>
            <person name="Lindblad-Toh K."/>
            <person name="Eichler E.E."/>
            <person name="Ponting C.P."/>
        </authorList>
    </citation>
    <scope>NUCLEOTIDE SEQUENCE [LARGE SCALE GENOMIC DNA]</scope>
    <source>
        <strain>C57BL/6J</strain>
    </source>
</reference>
<reference key="3">
    <citation type="journal article" date="2003" name="Proc. Natl. Acad. Sci. U.S.A.">
        <title>The G protein-coupled receptor repertoires of human and mouse.</title>
        <authorList>
            <person name="Vassilatis D.K."/>
            <person name="Hohmann J.G."/>
            <person name="Zeng H."/>
            <person name="Li F."/>
            <person name="Ranchalis J.E."/>
            <person name="Mortrud M.T."/>
            <person name="Brown A."/>
            <person name="Rodriguez S.S."/>
            <person name="Weller J.R."/>
            <person name="Wright A.C."/>
            <person name="Bergmann J.E."/>
            <person name="Gaitanaris G.A."/>
        </authorList>
    </citation>
    <scope>NUCLEOTIDE SEQUENCE [LARGE SCALE MRNA] OF 726-810</scope>
</reference>
<comment type="function">
    <text>Orphan receptor.</text>
</comment>
<comment type="subunit">
    <text evidence="2">Heterodimer of 2 chains generated by proteolytic processing; the large extracellular N-terminal fragment and the membrane-bound C-terminal fragment predominantly remain associated and non-covalently linked.</text>
</comment>
<comment type="subcellular location">
    <subcellularLocation>
        <location evidence="1">Membrane</location>
        <topology evidence="1">Multi-pass membrane protein</topology>
    </subcellularLocation>
</comment>
<comment type="tissue specificity">
    <text evidence="4">Expression is restricted to testis and circumvallate papillae.</text>
</comment>
<comment type="PTM">
    <text evidence="2">Autoproteolytically processed at the GPS region of the GAIN-B domain; this cleavage modulates receptor activity.</text>
</comment>
<comment type="similarity">
    <text evidence="5">Belongs to the G-protein coupled receptor 2 family. Adhesion G-protein coupled receptor (ADGR) subfamily.</text>
</comment>
<accession>Q58Y75</accession>
<accession>F8VPU1</accession>
<accession>Q80T50</accession>
<keyword id="KW-1015">Disulfide bond</keyword>
<keyword id="KW-0297">G-protein coupled receptor</keyword>
<keyword id="KW-0325">Glycoprotein</keyword>
<keyword id="KW-0472">Membrane</keyword>
<keyword id="KW-0675">Receptor</keyword>
<keyword id="KW-1185">Reference proteome</keyword>
<keyword id="KW-0732">Signal</keyword>
<keyword id="KW-0807">Transducer</keyword>
<keyword id="KW-0812">Transmembrane</keyword>
<keyword id="KW-1133">Transmembrane helix</keyword>
<evidence type="ECO:0000255" key="1"/>
<evidence type="ECO:0000255" key="2">
    <source>
        <dbReference type="PROSITE-ProRule" id="PRU00098"/>
    </source>
</evidence>
<evidence type="ECO:0000256" key="3">
    <source>
        <dbReference type="SAM" id="MobiDB-lite"/>
    </source>
</evidence>
<evidence type="ECO:0000269" key="4">
    <source>
    </source>
</evidence>
<evidence type="ECO:0000305" key="5"/>
<feature type="signal peptide" evidence="1">
    <location>
        <begin position="1"/>
        <end position="20"/>
    </location>
</feature>
<feature type="chain" id="PRO_0000305305" description="Adhesion G-protein coupled receptor F3">
    <location>
        <begin position="21"/>
        <end position="991"/>
    </location>
</feature>
<feature type="topological domain" description="Extracellular" evidence="5">
    <location>
        <begin position="21"/>
        <end position="694"/>
    </location>
</feature>
<feature type="transmembrane region" description="Helical; Name=1" evidence="1">
    <location>
        <begin position="695"/>
        <end position="715"/>
    </location>
</feature>
<feature type="topological domain" description="Cytoplasmic" evidence="5">
    <location>
        <begin position="716"/>
        <end position="730"/>
    </location>
</feature>
<feature type="transmembrane region" description="Helical; Name=2" evidence="1">
    <location>
        <begin position="731"/>
        <end position="751"/>
    </location>
</feature>
<feature type="topological domain" description="Extracellular" evidence="5">
    <location>
        <begin position="752"/>
        <end position="757"/>
    </location>
</feature>
<feature type="transmembrane region" description="Helical; Name=3" evidence="1">
    <location>
        <begin position="758"/>
        <end position="778"/>
    </location>
</feature>
<feature type="topological domain" description="Cytoplasmic" evidence="5">
    <location>
        <begin position="779"/>
        <end position="799"/>
    </location>
</feature>
<feature type="transmembrane region" description="Helical; Name=4" evidence="1">
    <location>
        <begin position="800"/>
        <end position="820"/>
    </location>
</feature>
<feature type="topological domain" description="Extracellular" evidence="5">
    <location>
        <begin position="821"/>
        <end position="850"/>
    </location>
</feature>
<feature type="transmembrane region" description="Helical; Name=5" evidence="1">
    <location>
        <begin position="851"/>
        <end position="871"/>
    </location>
</feature>
<feature type="topological domain" description="Cytoplasmic" evidence="5">
    <location>
        <begin position="872"/>
        <end position="892"/>
    </location>
</feature>
<feature type="transmembrane region" description="Helical; Name=6" evidence="1">
    <location>
        <begin position="893"/>
        <end position="913"/>
    </location>
</feature>
<feature type="topological domain" description="Extracellular" evidence="5">
    <location>
        <begin position="914"/>
        <end position="916"/>
    </location>
</feature>
<feature type="transmembrane region" description="Helical; Name=7" evidence="1">
    <location>
        <begin position="917"/>
        <end position="937"/>
    </location>
</feature>
<feature type="topological domain" description="Cytoplasmic" evidence="5">
    <location>
        <begin position="938"/>
        <end position="991"/>
    </location>
</feature>
<feature type="domain" description="GAIN-B" evidence="2">
    <location>
        <begin position="519"/>
        <end position="684"/>
    </location>
</feature>
<feature type="region of interest" description="GPS" evidence="2">
    <location>
        <begin position="635"/>
        <end position="684"/>
    </location>
</feature>
<feature type="region of interest" description="Disordered" evidence="3">
    <location>
        <begin position="964"/>
        <end position="991"/>
    </location>
</feature>
<feature type="compositionally biased region" description="Basic and acidic residues" evidence="3">
    <location>
        <begin position="972"/>
        <end position="991"/>
    </location>
</feature>
<feature type="site" description="Cleavage; by autolysis" evidence="2">
    <location>
        <begin position="671"/>
        <end position="672"/>
    </location>
</feature>
<feature type="glycosylation site" description="N-linked (GlcNAc...) asparagine" evidence="1">
    <location>
        <position position="75"/>
    </location>
</feature>
<feature type="glycosylation site" description="N-linked (GlcNAc...) asparagine" evidence="1">
    <location>
        <position position="102"/>
    </location>
</feature>
<feature type="glycosylation site" description="N-linked (GlcNAc...) asparagine" evidence="1">
    <location>
        <position position="118"/>
    </location>
</feature>
<feature type="glycosylation site" description="N-linked (GlcNAc...) asparagine" evidence="1">
    <location>
        <position position="321"/>
    </location>
</feature>
<feature type="glycosylation site" description="N-linked (GlcNAc...) asparagine" evidence="1">
    <location>
        <position position="362"/>
    </location>
</feature>
<feature type="glycosylation site" description="N-linked (GlcNAc...) asparagine" evidence="1">
    <location>
        <position position="484"/>
    </location>
</feature>
<feature type="glycosylation site" description="N-linked (GlcNAc...) asparagine" evidence="1">
    <location>
        <position position="571"/>
    </location>
</feature>
<feature type="glycosylation site" description="N-linked (GlcNAc...) asparagine" evidence="1">
    <location>
        <position position="589"/>
    </location>
</feature>
<feature type="glycosylation site" description="N-linked (GlcNAc...) asparagine" evidence="1">
    <location>
        <position position="630"/>
    </location>
</feature>
<feature type="glycosylation site" description="N-linked (GlcNAc...) asparagine" evidence="1">
    <location>
        <position position="660"/>
    </location>
</feature>
<feature type="disulfide bond" evidence="2">
    <location>
        <begin position="635"/>
        <end position="666"/>
    </location>
</feature>
<feature type="disulfide bond" evidence="2">
    <location>
        <begin position="654"/>
        <end position="668"/>
    </location>
</feature>
<feature type="sequence conflict" description="In Ref. 1; AAW23327." evidence="5" ref="1">
    <original>S</original>
    <variation>G</variation>
    <location>
        <position position="201"/>
    </location>
</feature>
<feature type="sequence conflict" description="In Ref. 1; AAW23327." evidence="5" ref="1">
    <original>A</original>
    <variation>T</variation>
    <location>
        <position position="455"/>
    </location>
</feature>
<dbReference type="EMBL" id="AY701869">
    <property type="protein sequence ID" value="AAW23327.1"/>
    <property type="molecule type" value="mRNA"/>
</dbReference>
<dbReference type="EMBL" id="AC158757">
    <property type="status" value="NOT_ANNOTATED_CDS"/>
    <property type="molecule type" value="Genomic_DNA"/>
</dbReference>
<dbReference type="EMBL" id="AY255593">
    <property type="protein sequence ID" value="AAO85105.1"/>
    <property type="molecule type" value="mRNA"/>
</dbReference>
<dbReference type="CCDS" id="CCDS51450.1"/>
<dbReference type="RefSeq" id="NP_001014416.2">
    <property type="nucleotide sequence ID" value="NM_001014394.2"/>
</dbReference>
<dbReference type="SMR" id="Q58Y75"/>
<dbReference type="FunCoup" id="Q58Y75">
    <property type="interactions" value="2"/>
</dbReference>
<dbReference type="STRING" id="10090.ENSMUSP00000085440"/>
<dbReference type="MEROPS" id="P02.035"/>
<dbReference type="GlyCosmos" id="Q58Y75">
    <property type="glycosylation" value="10 sites, No reported glycans"/>
</dbReference>
<dbReference type="GlyGen" id="Q58Y75">
    <property type="glycosylation" value="12 sites"/>
</dbReference>
<dbReference type="PhosphoSitePlus" id="Q58Y75"/>
<dbReference type="PaxDb" id="10090-ENSMUSP00000085440"/>
<dbReference type="ProteomicsDB" id="296132"/>
<dbReference type="Antibodypedia" id="52007">
    <property type="antibodies" value="79 antibodies from 22 providers"/>
</dbReference>
<dbReference type="DNASU" id="381628"/>
<dbReference type="Ensembl" id="ENSMUST00000088117.11">
    <property type="protein sequence ID" value="ENSMUSP00000085440.6"/>
    <property type="gene ID" value="ENSMUSG00000067642.12"/>
</dbReference>
<dbReference type="GeneID" id="381628"/>
<dbReference type="KEGG" id="mmu:381628"/>
<dbReference type="UCSC" id="uc008wvg.1">
    <property type="organism name" value="mouse"/>
</dbReference>
<dbReference type="AGR" id="MGI:2685887"/>
<dbReference type="CTD" id="165082"/>
<dbReference type="MGI" id="MGI:2685887">
    <property type="gene designation" value="Adgrf3"/>
</dbReference>
<dbReference type="VEuPathDB" id="HostDB:ENSMUSG00000067642"/>
<dbReference type="eggNOG" id="KOG4193">
    <property type="taxonomic scope" value="Eukaryota"/>
</dbReference>
<dbReference type="GeneTree" id="ENSGT00940000161541"/>
<dbReference type="HOGENOM" id="CLU_010357_0_0_1"/>
<dbReference type="InParanoid" id="Q58Y75"/>
<dbReference type="OMA" id="YQWNASV"/>
<dbReference type="OrthoDB" id="10040049at2759"/>
<dbReference type="BioGRID-ORCS" id="381628">
    <property type="hits" value="1 hit in 76 CRISPR screens"/>
</dbReference>
<dbReference type="ChiTaRS" id="Adgrf3">
    <property type="organism name" value="mouse"/>
</dbReference>
<dbReference type="PRO" id="PR:Q58Y75"/>
<dbReference type="Proteomes" id="UP000000589">
    <property type="component" value="Chromosome 5"/>
</dbReference>
<dbReference type="RNAct" id="Q58Y75">
    <property type="molecule type" value="protein"/>
</dbReference>
<dbReference type="Bgee" id="ENSMUSG00000067642">
    <property type="expression patterns" value="Expressed in spermatid and 21 other cell types or tissues"/>
</dbReference>
<dbReference type="ExpressionAtlas" id="Q58Y75">
    <property type="expression patterns" value="baseline and differential"/>
</dbReference>
<dbReference type="GO" id="GO:0016020">
    <property type="term" value="C:membrane"/>
    <property type="evidence" value="ECO:0007669"/>
    <property type="project" value="UniProtKB-SubCell"/>
</dbReference>
<dbReference type="GO" id="GO:0004930">
    <property type="term" value="F:G protein-coupled receptor activity"/>
    <property type="evidence" value="ECO:0007669"/>
    <property type="project" value="UniProtKB-KW"/>
</dbReference>
<dbReference type="GO" id="GO:0007166">
    <property type="term" value="P:cell surface receptor signaling pathway"/>
    <property type="evidence" value="ECO:0007669"/>
    <property type="project" value="InterPro"/>
</dbReference>
<dbReference type="FunFam" id="1.20.1070.10:FF:000058">
    <property type="entry name" value="Adhesion G protein-coupled receptor F5"/>
    <property type="match status" value="1"/>
</dbReference>
<dbReference type="Gene3D" id="2.60.220.50">
    <property type="match status" value="1"/>
</dbReference>
<dbReference type="Gene3D" id="4.10.1240.10">
    <property type="entry name" value="GPCR, family 2, extracellular hormone receptor domain"/>
    <property type="match status" value="1"/>
</dbReference>
<dbReference type="Gene3D" id="1.20.1070.10">
    <property type="entry name" value="Rhodopsin 7-helix transmembrane proteins"/>
    <property type="match status" value="1"/>
</dbReference>
<dbReference type="InterPro" id="IPR051587">
    <property type="entry name" value="Adhesion_GPCR"/>
</dbReference>
<dbReference type="InterPro" id="IPR057244">
    <property type="entry name" value="GAIN_B"/>
</dbReference>
<dbReference type="InterPro" id="IPR046338">
    <property type="entry name" value="GAIN_dom_sf"/>
</dbReference>
<dbReference type="InterPro" id="IPR017981">
    <property type="entry name" value="GPCR_2-like_7TM"/>
</dbReference>
<dbReference type="InterPro" id="IPR036445">
    <property type="entry name" value="GPCR_2_extracell_dom_sf"/>
</dbReference>
<dbReference type="InterPro" id="IPR001879">
    <property type="entry name" value="GPCR_2_extracellular_dom"/>
</dbReference>
<dbReference type="InterPro" id="IPR000832">
    <property type="entry name" value="GPCR_2_secretin-like"/>
</dbReference>
<dbReference type="InterPro" id="IPR017983">
    <property type="entry name" value="GPCR_2_secretin-like_CS"/>
</dbReference>
<dbReference type="InterPro" id="IPR000203">
    <property type="entry name" value="GPS"/>
</dbReference>
<dbReference type="InterPro" id="IPR056274">
    <property type="entry name" value="Ig_ADGRF3"/>
</dbReference>
<dbReference type="PANTHER" id="PTHR45813:SF2">
    <property type="entry name" value="ADHESION G-PROTEIN COUPLED RECEPTOR F3"/>
    <property type="match status" value="1"/>
</dbReference>
<dbReference type="PANTHER" id="PTHR45813">
    <property type="entry name" value="IG-LIKE DOMAIN-CONTAINING PROTEIN"/>
    <property type="match status" value="1"/>
</dbReference>
<dbReference type="Pfam" id="PF00002">
    <property type="entry name" value="7tm_2"/>
    <property type="match status" value="1"/>
</dbReference>
<dbReference type="Pfam" id="PF25387">
    <property type="entry name" value="ADGRF3_N"/>
    <property type="match status" value="1"/>
</dbReference>
<dbReference type="Pfam" id="PF01825">
    <property type="entry name" value="GPS"/>
    <property type="match status" value="1"/>
</dbReference>
<dbReference type="Pfam" id="PF24528">
    <property type="entry name" value="Ig_ADGRF3"/>
    <property type="match status" value="1"/>
</dbReference>
<dbReference type="PRINTS" id="PR00249">
    <property type="entry name" value="GPCRSECRETIN"/>
</dbReference>
<dbReference type="SMART" id="SM00303">
    <property type="entry name" value="GPS"/>
    <property type="match status" value="1"/>
</dbReference>
<dbReference type="SUPFAM" id="SSF81321">
    <property type="entry name" value="Family A G protein-coupled receptor-like"/>
    <property type="match status" value="1"/>
</dbReference>
<dbReference type="SUPFAM" id="SSF111418">
    <property type="entry name" value="Hormone receptor domain"/>
    <property type="match status" value="1"/>
</dbReference>
<dbReference type="PROSITE" id="PS00650">
    <property type="entry name" value="G_PROTEIN_RECEP_F2_2"/>
    <property type="match status" value="1"/>
</dbReference>
<dbReference type="PROSITE" id="PS50227">
    <property type="entry name" value="G_PROTEIN_RECEP_F2_3"/>
    <property type="match status" value="1"/>
</dbReference>
<dbReference type="PROSITE" id="PS50261">
    <property type="entry name" value="G_PROTEIN_RECEP_F2_4"/>
    <property type="match status" value="1"/>
</dbReference>
<dbReference type="PROSITE" id="PS50221">
    <property type="entry name" value="GAIN_B"/>
    <property type="match status" value="1"/>
</dbReference>
<organism>
    <name type="scientific">Mus musculus</name>
    <name type="common">Mouse</name>
    <dbReference type="NCBI Taxonomy" id="10090"/>
    <lineage>
        <taxon>Eukaryota</taxon>
        <taxon>Metazoa</taxon>
        <taxon>Chordata</taxon>
        <taxon>Craniata</taxon>
        <taxon>Vertebrata</taxon>
        <taxon>Euteleostomi</taxon>
        <taxon>Mammalia</taxon>
        <taxon>Eutheria</taxon>
        <taxon>Euarchontoglires</taxon>
        <taxon>Glires</taxon>
        <taxon>Rodentia</taxon>
        <taxon>Myomorpha</taxon>
        <taxon>Muroidea</taxon>
        <taxon>Muridae</taxon>
        <taxon>Murinae</taxon>
        <taxon>Mus</taxon>
        <taxon>Mus</taxon>
    </lineage>
</organism>
<name>AGRF3_MOUSE</name>
<proteinExistence type="evidence at transcript level"/>
<sequence>MSSLALSQLLLAVTLPLLELEPTFVPTAQSELSPYGGKSGQQLNQYSGEGESVLVSSYVHLEFSSTAWPQELSKNFTLPTALAVLPPKTLTGLGLTTECRANHSGTSLCTCHPGYQWNATLCSLYPHCWGRRSERDSCMCRSFHGPVTGYCQLLPPVPANLILDSQLQMHGNTLNLILLKKEEATNLRWFLRHSKNHTPISLWPGTNVLQTSSEGQSGLRVARMSRHWAGEYESIFEAQGFRWRLRQLVKVPLQEEEVVRLPDALSISCTASTGFQLSCCIPLTTDYTATWSPGEDSQASLQKMSDSQCFVLAVPHCPATNTTYTCTLQSQNLPPLVAPVSITIIQDGDTTCPEDFSVVSWNVTKAGFVAQAPCPVNKKGVVKRLCGTDGIWRPVQNTCTEAKILTLCLKAKLLEGQGKPYEEVPWILSELQEQVGVASTPSDLWEMLHTVTLLAKVVAETSTELTGSALKDLLTTTDKILDANISALWTLAQAQEPSMGSDFLKAVETLVHSLRPQQHPFSFSSANVLLQSQLLRHSSPPGYQMSFSTWPLLQARIPWHSLAPLVHSGTNVSITSLVLQKLDYRLPSNYTQGLWNTPYTTPGLILVVSITADGQAFTQAEVIMDYEDMNGTLHCVFWDHRVFQGQGGWSDEGCEVHAANASITQCICQHLTAFSILMSQHTVPENPTLDLLSQVGTGASVLALLVCLAIYGLVWRVVVRNKVAFFRHTTLFNMVICLLVADTCFLGSPFLPSGYHSLICLVTAFLCHFFYLATFFWMLAQALVLAHQLLFVFHQLSKHVVLSLMVMLGYLCPLGFAGVTLGLYLPQRKYLWEGKCFLNGGGVMLYSFSEPVLAIVGVNGLVLVIAVLKLLRPSLSEGPTVEKRQALVGVLKALLILTPIFGLTWGLGVATLFDGSIVSHYAFSILNSLQGVFILVFGCLTDKKVLEALRKRLRGSRSSNSAISMVTNETYTSEHSKERSEPASYEERMTD</sequence>